<organism>
    <name type="scientific">Xanthomonas oryzae pv. oryzae (strain MAFF 311018)</name>
    <dbReference type="NCBI Taxonomy" id="342109"/>
    <lineage>
        <taxon>Bacteria</taxon>
        <taxon>Pseudomonadati</taxon>
        <taxon>Pseudomonadota</taxon>
        <taxon>Gammaproteobacteria</taxon>
        <taxon>Lysobacterales</taxon>
        <taxon>Lysobacteraceae</taxon>
        <taxon>Xanthomonas</taxon>
    </lineage>
</organism>
<protein>
    <recommendedName>
        <fullName evidence="1">Glucokinase</fullName>
        <ecNumber evidence="1">2.7.1.2</ecNumber>
    </recommendedName>
    <alternativeName>
        <fullName evidence="1">Glucose kinase</fullName>
    </alternativeName>
</protein>
<evidence type="ECO:0000255" key="1">
    <source>
        <dbReference type="HAMAP-Rule" id="MF_00524"/>
    </source>
</evidence>
<reference key="1">
    <citation type="journal article" date="2005" name="Jpn. Agric. Res. Q.">
        <title>Genome sequence of Xanthomonas oryzae pv. oryzae suggests contribution of large numbers of effector genes and insertion sequences to its race diversity.</title>
        <authorList>
            <person name="Ochiai H."/>
            <person name="Inoue Y."/>
            <person name="Takeya M."/>
            <person name="Sasaki A."/>
            <person name="Kaku H."/>
        </authorList>
    </citation>
    <scope>NUCLEOTIDE SEQUENCE [LARGE SCALE GENOMIC DNA]</scope>
    <source>
        <strain>MAFF 311018</strain>
    </source>
</reference>
<name>GLK_XANOM</name>
<comment type="catalytic activity">
    <reaction evidence="1">
        <text>D-glucose + ATP = D-glucose 6-phosphate + ADP + H(+)</text>
        <dbReference type="Rhea" id="RHEA:17825"/>
        <dbReference type="ChEBI" id="CHEBI:4167"/>
        <dbReference type="ChEBI" id="CHEBI:15378"/>
        <dbReference type="ChEBI" id="CHEBI:30616"/>
        <dbReference type="ChEBI" id="CHEBI:61548"/>
        <dbReference type="ChEBI" id="CHEBI:456216"/>
        <dbReference type="EC" id="2.7.1.2"/>
    </reaction>
</comment>
<comment type="subcellular location">
    <subcellularLocation>
        <location evidence="1">Cytoplasm</location>
    </subcellularLocation>
</comment>
<comment type="similarity">
    <text evidence="1">Belongs to the bacterial glucokinase family.</text>
</comment>
<accession>Q2P3D0</accession>
<gene>
    <name evidence="1" type="primary">glk</name>
    <name type="ordered locus">XOO2192</name>
</gene>
<keyword id="KW-0067">ATP-binding</keyword>
<keyword id="KW-0963">Cytoplasm</keyword>
<keyword id="KW-0324">Glycolysis</keyword>
<keyword id="KW-0418">Kinase</keyword>
<keyword id="KW-0547">Nucleotide-binding</keyword>
<keyword id="KW-0808">Transferase</keyword>
<feature type="chain" id="PRO_0000268793" description="Glucokinase">
    <location>
        <begin position="1"/>
        <end position="335"/>
    </location>
</feature>
<feature type="binding site" evidence="1">
    <location>
        <begin position="11"/>
        <end position="16"/>
    </location>
    <ligand>
        <name>ATP</name>
        <dbReference type="ChEBI" id="CHEBI:30616"/>
    </ligand>
</feature>
<sequence>MTAPSKPVLVADIGGTNARFALADVDASVPLLDDTSREFAVVDFTSLGEAARYYLDQIGVQATQGVFAVAGRVDGDEARITNHPWVISRSRTASMLGFSTLHLINDFAAQAMAISLLRPQDVVQVGGASWRPAPIDQPRNYGVIGPGTGLGVGGLIIRHGRCFPLETEGGHVSFPPGTPEEIRILEILSEQFGRVSNERLICGPGLVNIHRALSEIAGVDPGPLQPKDITARAAAGDPRSSRTIDLFCAIFGAIAGDMVLMQGAWDGVFLTGGLVPKVLDSLQHSGFRQRFEHKGRFSAIMSRVPSLAVMHPHAGLLGAAAYAVDAQRQPPGEQR</sequence>
<dbReference type="EC" id="2.7.1.2" evidence="1"/>
<dbReference type="EMBL" id="AP008229">
    <property type="protein sequence ID" value="BAE68947.1"/>
    <property type="molecule type" value="Genomic_DNA"/>
</dbReference>
<dbReference type="RefSeq" id="WP_011258988.1">
    <property type="nucleotide sequence ID" value="NC_007705.1"/>
</dbReference>
<dbReference type="SMR" id="Q2P3D0"/>
<dbReference type="KEGG" id="xom:XOO2192"/>
<dbReference type="HOGENOM" id="CLU_042582_1_0_6"/>
<dbReference type="GO" id="GO:0005829">
    <property type="term" value="C:cytosol"/>
    <property type="evidence" value="ECO:0007669"/>
    <property type="project" value="TreeGrafter"/>
</dbReference>
<dbReference type="GO" id="GO:0005524">
    <property type="term" value="F:ATP binding"/>
    <property type="evidence" value="ECO:0007669"/>
    <property type="project" value="UniProtKB-UniRule"/>
</dbReference>
<dbReference type="GO" id="GO:0005536">
    <property type="term" value="F:D-glucose binding"/>
    <property type="evidence" value="ECO:0007669"/>
    <property type="project" value="InterPro"/>
</dbReference>
<dbReference type="GO" id="GO:0004340">
    <property type="term" value="F:glucokinase activity"/>
    <property type="evidence" value="ECO:0007669"/>
    <property type="project" value="UniProtKB-UniRule"/>
</dbReference>
<dbReference type="GO" id="GO:0006096">
    <property type="term" value="P:glycolytic process"/>
    <property type="evidence" value="ECO:0007669"/>
    <property type="project" value="UniProtKB-UniRule"/>
</dbReference>
<dbReference type="CDD" id="cd24008">
    <property type="entry name" value="ASKHA_NBD_GLK"/>
    <property type="match status" value="1"/>
</dbReference>
<dbReference type="FunFam" id="3.40.367.20:FF:000007">
    <property type="entry name" value="Glucokinase"/>
    <property type="match status" value="1"/>
</dbReference>
<dbReference type="Gene3D" id="3.30.420.40">
    <property type="match status" value="1"/>
</dbReference>
<dbReference type="Gene3D" id="3.40.367.20">
    <property type="match status" value="1"/>
</dbReference>
<dbReference type="HAMAP" id="MF_00524">
    <property type="entry name" value="Glucokinase"/>
    <property type="match status" value="1"/>
</dbReference>
<dbReference type="InterPro" id="IPR043129">
    <property type="entry name" value="ATPase_NBD"/>
</dbReference>
<dbReference type="InterPro" id="IPR050201">
    <property type="entry name" value="Bacterial_glucokinase"/>
</dbReference>
<dbReference type="InterPro" id="IPR003836">
    <property type="entry name" value="Glucokinase"/>
</dbReference>
<dbReference type="NCBIfam" id="TIGR00749">
    <property type="entry name" value="glk"/>
    <property type="match status" value="1"/>
</dbReference>
<dbReference type="PANTHER" id="PTHR47690">
    <property type="entry name" value="GLUCOKINASE"/>
    <property type="match status" value="1"/>
</dbReference>
<dbReference type="PANTHER" id="PTHR47690:SF1">
    <property type="entry name" value="GLUCOKINASE"/>
    <property type="match status" value="1"/>
</dbReference>
<dbReference type="Pfam" id="PF02685">
    <property type="entry name" value="Glucokinase"/>
    <property type="match status" value="1"/>
</dbReference>
<dbReference type="SUPFAM" id="SSF53067">
    <property type="entry name" value="Actin-like ATPase domain"/>
    <property type="match status" value="1"/>
</dbReference>
<proteinExistence type="inferred from homology"/>